<evidence type="ECO:0000255" key="1">
    <source>
        <dbReference type="HAMAP-Rule" id="MF_01849"/>
    </source>
</evidence>
<evidence type="ECO:0000255" key="2">
    <source>
        <dbReference type="PROSITE-ProRule" id="PRU01266"/>
    </source>
</evidence>
<protein>
    <recommendedName>
        <fullName evidence="1">Dual-specificity RNA methyltransferase RlmN</fullName>
        <ecNumber evidence="1">2.1.1.192</ecNumber>
    </recommendedName>
    <alternativeName>
        <fullName evidence="1">23S rRNA (adenine(2503)-C(2))-methyltransferase</fullName>
    </alternativeName>
    <alternativeName>
        <fullName evidence="1">23S rRNA m2A2503 methyltransferase</fullName>
    </alternativeName>
    <alternativeName>
        <fullName evidence="1">Ribosomal RNA large subunit methyltransferase N</fullName>
    </alternativeName>
    <alternativeName>
        <fullName evidence="1">tRNA (adenine(37)-C(2))-methyltransferase</fullName>
    </alternativeName>
    <alternativeName>
        <fullName evidence="1">tRNA m2A37 methyltransferase</fullName>
    </alternativeName>
</protein>
<name>RLMN_SYNAS</name>
<reference key="1">
    <citation type="journal article" date="2007" name="Proc. Natl. Acad. Sci. U.S.A.">
        <title>The genome of Syntrophus aciditrophicus: life at the thermodynamic limit of microbial growth.</title>
        <authorList>
            <person name="McInerney M.J."/>
            <person name="Rohlin L."/>
            <person name="Mouttaki H."/>
            <person name="Kim U."/>
            <person name="Krupp R.S."/>
            <person name="Rios-Hernandez L."/>
            <person name="Sieber J."/>
            <person name="Struchtemeyer C.G."/>
            <person name="Bhattacharyya A."/>
            <person name="Campbell J.W."/>
            <person name="Gunsalus R.P."/>
        </authorList>
    </citation>
    <scope>NUCLEOTIDE SEQUENCE [LARGE SCALE GENOMIC DNA]</scope>
    <source>
        <strain>SB</strain>
    </source>
</reference>
<sequence length="348" mass="39597">MHMNRINIRDMSLEEIESFISSLGKEKYRARQIMKWLYSQGAKSFDEMTTLSRAVRDQLNEMACITLPEIARVQQSSDGTRKILFRLQDNSFIESVLIPGKHNWTACISTQVGCHMGCRFCFTARQGFRRNLKPSEITGQLTMLQFYLPEGPEIKNIVMMGMGEPLANYRNTLKAIRIITSDYGLGFSTRKITLSTSGITPMIEQLGRDLCINLAISLNAPTDSIRSELMPVNRKYPLDRLLQACRNYPMPGRRMLTFEYILIDGVNSSPAHAEMLCRLLKGIRCKLNLIRFNEFPDCPFKTPSEETVLAFQQILVKHHYTAIIRASRGRDILAACGQLSGKALEEKL</sequence>
<accession>Q2LUM5</accession>
<comment type="function">
    <text evidence="1">Specifically methylates position 2 of adenine 2503 in 23S rRNA and position 2 of adenine 37 in tRNAs. m2A2503 modification seems to play a crucial role in the proofreading step occurring at the peptidyl transferase center and thus would serve to optimize ribosomal fidelity.</text>
</comment>
<comment type="catalytic activity">
    <reaction evidence="1">
        <text>adenosine(2503) in 23S rRNA + 2 reduced [2Fe-2S]-[ferredoxin] + 2 S-adenosyl-L-methionine = 2-methyladenosine(2503) in 23S rRNA + 5'-deoxyadenosine + L-methionine + 2 oxidized [2Fe-2S]-[ferredoxin] + S-adenosyl-L-homocysteine</text>
        <dbReference type="Rhea" id="RHEA:42916"/>
        <dbReference type="Rhea" id="RHEA-COMP:10000"/>
        <dbReference type="Rhea" id="RHEA-COMP:10001"/>
        <dbReference type="Rhea" id="RHEA-COMP:10152"/>
        <dbReference type="Rhea" id="RHEA-COMP:10282"/>
        <dbReference type="ChEBI" id="CHEBI:17319"/>
        <dbReference type="ChEBI" id="CHEBI:33737"/>
        <dbReference type="ChEBI" id="CHEBI:33738"/>
        <dbReference type="ChEBI" id="CHEBI:57844"/>
        <dbReference type="ChEBI" id="CHEBI:57856"/>
        <dbReference type="ChEBI" id="CHEBI:59789"/>
        <dbReference type="ChEBI" id="CHEBI:74411"/>
        <dbReference type="ChEBI" id="CHEBI:74497"/>
        <dbReference type="EC" id="2.1.1.192"/>
    </reaction>
</comment>
<comment type="catalytic activity">
    <reaction evidence="1">
        <text>adenosine(37) in tRNA + 2 reduced [2Fe-2S]-[ferredoxin] + 2 S-adenosyl-L-methionine = 2-methyladenosine(37) in tRNA + 5'-deoxyadenosine + L-methionine + 2 oxidized [2Fe-2S]-[ferredoxin] + S-adenosyl-L-homocysteine</text>
        <dbReference type="Rhea" id="RHEA:43332"/>
        <dbReference type="Rhea" id="RHEA-COMP:10000"/>
        <dbReference type="Rhea" id="RHEA-COMP:10001"/>
        <dbReference type="Rhea" id="RHEA-COMP:10162"/>
        <dbReference type="Rhea" id="RHEA-COMP:10485"/>
        <dbReference type="ChEBI" id="CHEBI:17319"/>
        <dbReference type="ChEBI" id="CHEBI:33737"/>
        <dbReference type="ChEBI" id="CHEBI:33738"/>
        <dbReference type="ChEBI" id="CHEBI:57844"/>
        <dbReference type="ChEBI" id="CHEBI:57856"/>
        <dbReference type="ChEBI" id="CHEBI:59789"/>
        <dbReference type="ChEBI" id="CHEBI:74411"/>
        <dbReference type="ChEBI" id="CHEBI:74497"/>
        <dbReference type="EC" id="2.1.1.192"/>
    </reaction>
</comment>
<comment type="cofactor">
    <cofactor evidence="1">
        <name>[4Fe-4S] cluster</name>
        <dbReference type="ChEBI" id="CHEBI:49883"/>
    </cofactor>
    <text evidence="1">Binds 1 [4Fe-4S] cluster. The cluster is coordinated with 3 cysteines and an exchangeable S-adenosyl-L-methionine.</text>
</comment>
<comment type="subcellular location">
    <subcellularLocation>
        <location evidence="1">Cytoplasm</location>
    </subcellularLocation>
</comment>
<comment type="miscellaneous">
    <text evidence="1">Reaction proceeds by a ping-pong mechanism involving intermediate methylation of a conserved cysteine residue.</text>
</comment>
<comment type="similarity">
    <text evidence="1">Belongs to the radical SAM superfamily. RlmN family.</text>
</comment>
<proteinExistence type="inferred from homology"/>
<gene>
    <name evidence="1" type="primary">rlmN</name>
    <name type="ordered locus">SYNAS_19040</name>
    <name type="ORF">SYN_01411</name>
</gene>
<dbReference type="EC" id="2.1.1.192" evidence="1"/>
<dbReference type="EMBL" id="CP000252">
    <property type="protein sequence ID" value="ABC77783.1"/>
    <property type="molecule type" value="Genomic_DNA"/>
</dbReference>
<dbReference type="RefSeq" id="WP_011417804.1">
    <property type="nucleotide sequence ID" value="NC_007759.1"/>
</dbReference>
<dbReference type="SMR" id="Q2LUM5"/>
<dbReference type="FunCoup" id="Q2LUM5">
    <property type="interactions" value="494"/>
</dbReference>
<dbReference type="STRING" id="56780.SYN_01411"/>
<dbReference type="KEGG" id="sat:SYN_01411"/>
<dbReference type="eggNOG" id="COG0820">
    <property type="taxonomic scope" value="Bacteria"/>
</dbReference>
<dbReference type="HOGENOM" id="CLU_029101_2_0_7"/>
<dbReference type="InParanoid" id="Q2LUM5"/>
<dbReference type="OrthoDB" id="9793973at2"/>
<dbReference type="Proteomes" id="UP000001933">
    <property type="component" value="Chromosome"/>
</dbReference>
<dbReference type="GO" id="GO:0005737">
    <property type="term" value="C:cytoplasm"/>
    <property type="evidence" value="ECO:0007669"/>
    <property type="project" value="UniProtKB-SubCell"/>
</dbReference>
<dbReference type="GO" id="GO:0051539">
    <property type="term" value="F:4 iron, 4 sulfur cluster binding"/>
    <property type="evidence" value="ECO:0007669"/>
    <property type="project" value="UniProtKB-UniRule"/>
</dbReference>
<dbReference type="GO" id="GO:0046872">
    <property type="term" value="F:metal ion binding"/>
    <property type="evidence" value="ECO:0007669"/>
    <property type="project" value="UniProtKB-KW"/>
</dbReference>
<dbReference type="GO" id="GO:0070040">
    <property type="term" value="F:rRNA (adenine(2503)-C2-)-methyltransferase activity"/>
    <property type="evidence" value="ECO:0007669"/>
    <property type="project" value="UniProtKB-UniRule"/>
</dbReference>
<dbReference type="GO" id="GO:0019843">
    <property type="term" value="F:rRNA binding"/>
    <property type="evidence" value="ECO:0007669"/>
    <property type="project" value="UniProtKB-UniRule"/>
</dbReference>
<dbReference type="GO" id="GO:0002935">
    <property type="term" value="F:tRNA (adenine(37)-C2)-methyltransferase activity"/>
    <property type="evidence" value="ECO:0007669"/>
    <property type="project" value="UniProtKB-UniRule"/>
</dbReference>
<dbReference type="GO" id="GO:0000049">
    <property type="term" value="F:tRNA binding"/>
    <property type="evidence" value="ECO:0007669"/>
    <property type="project" value="UniProtKB-UniRule"/>
</dbReference>
<dbReference type="GO" id="GO:0070475">
    <property type="term" value="P:rRNA base methylation"/>
    <property type="evidence" value="ECO:0007669"/>
    <property type="project" value="UniProtKB-UniRule"/>
</dbReference>
<dbReference type="GO" id="GO:0030488">
    <property type="term" value="P:tRNA methylation"/>
    <property type="evidence" value="ECO:0007669"/>
    <property type="project" value="UniProtKB-UniRule"/>
</dbReference>
<dbReference type="CDD" id="cd01335">
    <property type="entry name" value="Radical_SAM"/>
    <property type="match status" value="1"/>
</dbReference>
<dbReference type="FunFam" id="3.20.20.70:FF:000014">
    <property type="entry name" value="Probable dual-specificity RNA methyltransferase RlmN"/>
    <property type="match status" value="1"/>
</dbReference>
<dbReference type="Gene3D" id="1.10.150.530">
    <property type="match status" value="1"/>
</dbReference>
<dbReference type="Gene3D" id="3.20.20.70">
    <property type="entry name" value="Aldolase class I"/>
    <property type="match status" value="1"/>
</dbReference>
<dbReference type="HAMAP" id="MF_01849">
    <property type="entry name" value="RNA_methyltr_RlmN"/>
    <property type="match status" value="1"/>
</dbReference>
<dbReference type="InterPro" id="IPR013785">
    <property type="entry name" value="Aldolase_TIM"/>
</dbReference>
<dbReference type="InterPro" id="IPR040072">
    <property type="entry name" value="Methyltransferase_A"/>
</dbReference>
<dbReference type="InterPro" id="IPR048641">
    <property type="entry name" value="RlmN_N"/>
</dbReference>
<dbReference type="InterPro" id="IPR027492">
    <property type="entry name" value="RNA_MTrfase_RlmN"/>
</dbReference>
<dbReference type="InterPro" id="IPR004383">
    <property type="entry name" value="rRNA_lsu_MTrfase_RlmN/Cfr"/>
</dbReference>
<dbReference type="InterPro" id="IPR007197">
    <property type="entry name" value="rSAM"/>
</dbReference>
<dbReference type="NCBIfam" id="TIGR00048">
    <property type="entry name" value="rRNA_mod_RlmN"/>
    <property type="match status" value="1"/>
</dbReference>
<dbReference type="PANTHER" id="PTHR30544">
    <property type="entry name" value="23S RRNA METHYLTRANSFERASE"/>
    <property type="match status" value="1"/>
</dbReference>
<dbReference type="PANTHER" id="PTHR30544:SF5">
    <property type="entry name" value="RADICAL SAM CORE DOMAIN-CONTAINING PROTEIN"/>
    <property type="match status" value="1"/>
</dbReference>
<dbReference type="Pfam" id="PF04055">
    <property type="entry name" value="Radical_SAM"/>
    <property type="match status" value="1"/>
</dbReference>
<dbReference type="Pfam" id="PF21016">
    <property type="entry name" value="RlmN_N"/>
    <property type="match status" value="1"/>
</dbReference>
<dbReference type="PIRSF" id="PIRSF006004">
    <property type="entry name" value="CHP00048"/>
    <property type="match status" value="1"/>
</dbReference>
<dbReference type="SFLD" id="SFLDF00275">
    <property type="entry name" value="adenosine_C2_methyltransferase"/>
    <property type="match status" value="1"/>
</dbReference>
<dbReference type="SFLD" id="SFLDS00029">
    <property type="entry name" value="Radical_SAM"/>
    <property type="match status" value="1"/>
</dbReference>
<dbReference type="SUPFAM" id="SSF102114">
    <property type="entry name" value="Radical SAM enzymes"/>
    <property type="match status" value="1"/>
</dbReference>
<dbReference type="PROSITE" id="PS51918">
    <property type="entry name" value="RADICAL_SAM"/>
    <property type="match status" value="1"/>
</dbReference>
<feature type="chain" id="PRO_0000350493" description="Dual-specificity RNA methyltransferase RlmN">
    <location>
        <begin position="1"/>
        <end position="348"/>
    </location>
</feature>
<feature type="domain" description="Radical SAM core" evidence="2">
    <location>
        <begin position="100"/>
        <end position="330"/>
    </location>
</feature>
<feature type="active site" description="Proton acceptor" evidence="1">
    <location>
        <position position="94"/>
    </location>
</feature>
<feature type="active site" description="S-methylcysteine intermediate" evidence="1">
    <location>
        <position position="336"/>
    </location>
</feature>
<feature type="binding site" evidence="1">
    <location>
        <position position="114"/>
    </location>
    <ligand>
        <name>[4Fe-4S] cluster</name>
        <dbReference type="ChEBI" id="CHEBI:49883"/>
        <note>4Fe-4S-S-AdoMet</note>
    </ligand>
</feature>
<feature type="binding site" evidence="1">
    <location>
        <position position="118"/>
    </location>
    <ligand>
        <name>[4Fe-4S] cluster</name>
        <dbReference type="ChEBI" id="CHEBI:49883"/>
        <note>4Fe-4S-S-AdoMet</note>
    </ligand>
</feature>
<feature type="binding site" evidence="1">
    <location>
        <position position="121"/>
    </location>
    <ligand>
        <name>[4Fe-4S] cluster</name>
        <dbReference type="ChEBI" id="CHEBI:49883"/>
        <note>4Fe-4S-S-AdoMet</note>
    </ligand>
</feature>
<feature type="binding site" evidence="1">
    <location>
        <begin position="163"/>
        <end position="164"/>
    </location>
    <ligand>
        <name>S-adenosyl-L-methionine</name>
        <dbReference type="ChEBI" id="CHEBI:59789"/>
    </ligand>
</feature>
<feature type="binding site" evidence="1">
    <location>
        <position position="195"/>
    </location>
    <ligand>
        <name>S-adenosyl-L-methionine</name>
        <dbReference type="ChEBI" id="CHEBI:59789"/>
    </ligand>
</feature>
<feature type="binding site" evidence="1">
    <location>
        <begin position="217"/>
        <end position="219"/>
    </location>
    <ligand>
        <name>S-adenosyl-L-methionine</name>
        <dbReference type="ChEBI" id="CHEBI:59789"/>
    </ligand>
</feature>
<feature type="binding site" evidence="1">
    <location>
        <position position="293"/>
    </location>
    <ligand>
        <name>S-adenosyl-L-methionine</name>
        <dbReference type="ChEBI" id="CHEBI:59789"/>
    </ligand>
</feature>
<feature type="disulfide bond" description="(transient)" evidence="1">
    <location>
        <begin position="107"/>
        <end position="336"/>
    </location>
</feature>
<keyword id="KW-0004">4Fe-4S</keyword>
<keyword id="KW-0963">Cytoplasm</keyword>
<keyword id="KW-1015">Disulfide bond</keyword>
<keyword id="KW-0408">Iron</keyword>
<keyword id="KW-0411">Iron-sulfur</keyword>
<keyword id="KW-0479">Metal-binding</keyword>
<keyword id="KW-0489">Methyltransferase</keyword>
<keyword id="KW-1185">Reference proteome</keyword>
<keyword id="KW-0698">rRNA processing</keyword>
<keyword id="KW-0949">S-adenosyl-L-methionine</keyword>
<keyword id="KW-0808">Transferase</keyword>
<keyword id="KW-0819">tRNA processing</keyword>
<organism>
    <name type="scientific">Syntrophus aciditrophicus (strain SB)</name>
    <dbReference type="NCBI Taxonomy" id="56780"/>
    <lineage>
        <taxon>Bacteria</taxon>
        <taxon>Pseudomonadati</taxon>
        <taxon>Thermodesulfobacteriota</taxon>
        <taxon>Syntrophia</taxon>
        <taxon>Syntrophales</taxon>
        <taxon>Syntrophaceae</taxon>
        <taxon>Syntrophus</taxon>
    </lineage>
</organism>